<protein>
    <recommendedName>
        <fullName>Probable aquaporin NIP-type</fullName>
    </recommendedName>
    <alternativeName>
        <fullName>Pollen-specific membrane integral protein</fullName>
    </alternativeName>
</protein>
<accession>P49173</accession>
<organism>
    <name type="scientific">Nicotiana alata</name>
    <name type="common">Winged tobacco</name>
    <name type="synonym">Persian tobacco</name>
    <dbReference type="NCBI Taxonomy" id="4087"/>
    <lineage>
        <taxon>Eukaryota</taxon>
        <taxon>Viridiplantae</taxon>
        <taxon>Streptophyta</taxon>
        <taxon>Embryophyta</taxon>
        <taxon>Tracheophyta</taxon>
        <taxon>Spermatophyta</taxon>
        <taxon>Magnoliopsida</taxon>
        <taxon>eudicotyledons</taxon>
        <taxon>Gunneridae</taxon>
        <taxon>Pentapetalae</taxon>
        <taxon>asterids</taxon>
        <taxon>lamiids</taxon>
        <taxon>Solanales</taxon>
        <taxon>Solanaceae</taxon>
        <taxon>Nicotianoideae</taxon>
        <taxon>Nicotianeae</taxon>
        <taxon>Nicotiana</taxon>
    </lineage>
</organism>
<reference key="1">
    <citation type="submission" date="1995-01" db="EMBL/GenBank/DDBJ databases">
        <title>Cloning and characterization of a pollen-specific protein from Nicotiana alata belonging to the MIP family of integral membrane proteins.</title>
        <authorList>
            <person name="Rodin J."/>
            <person name="Dodds P.N."/>
            <person name="McClure B.A."/>
            <person name="Newbigin E."/>
            <person name="Clarke A.E."/>
        </authorList>
    </citation>
    <scope>NUCLEOTIDE SEQUENCE [MRNA]</scope>
    <source>
        <tissue>Pollen</tissue>
    </source>
</reference>
<evidence type="ECO:0000250" key="1"/>
<evidence type="ECO:0000255" key="2"/>
<evidence type="ECO:0000305" key="3"/>
<keyword id="KW-0472">Membrane</keyword>
<keyword id="KW-0677">Repeat</keyword>
<keyword id="KW-0812">Transmembrane</keyword>
<keyword id="KW-1133">Transmembrane helix</keyword>
<keyword id="KW-0813">Transport</keyword>
<proteinExistence type="evidence at transcript level"/>
<name>NIP1_NICAL</name>
<dbReference type="EMBL" id="U20490">
    <property type="protein sequence ID" value="AAA62235.1"/>
    <property type="molecule type" value="mRNA"/>
</dbReference>
<dbReference type="SMR" id="P49173"/>
<dbReference type="GO" id="GO:0016020">
    <property type="term" value="C:membrane"/>
    <property type="evidence" value="ECO:0007669"/>
    <property type="project" value="UniProtKB-SubCell"/>
</dbReference>
<dbReference type="GO" id="GO:0015267">
    <property type="term" value="F:channel activity"/>
    <property type="evidence" value="ECO:0007669"/>
    <property type="project" value="InterPro"/>
</dbReference>
<dbReference type="CDD" id="cd00333">
    <property type="entry name" value="MIP"/>
    <property type="match status" value="1"/>
</dbReference>
<dbReference type="Gene3D" id="1.20.1080.10">
    <property type="entry name" value="Glycerol uptake facilitator protein"/>
    <property type="match status" value="1"/>
</dbReference>
<dbReference type="InterPro" id="IPR023271">
    <property type="entry name" value="Aquaporin-like"/>
</dbReference>
<dbReference type="InterPro" id="IPR034294">
    <property type="entry name" value="Aquaporin_transptr"/>
</dbReference>
<dbReference type="InterPro" id="IPR000425">
    <property type="entry name" value="MIP"/>
</dbReference>
<dbReference type="InterPro" id="IPR022357">
    <property type="entry name" value="MIP_CS"/>
</dbReference>
<dbReference type="NCBIfam" id="TIGR00861">
    <property type="entry name" value="MIP"/>
    <property type="match status" value="1"/>
</dbReference>
<dbReference type="PANTHER" id="PTHR45724:SF6">
    <property type="entry name" value="AQUAPORIN NIP-TYPE"/>
    <property type="match status" value="1"/>
</dbReference>
<dbReference type="PANTHER" id="PTHR45724">
    <property type="entry name" value="AQUAPORIN NIP2-1"/>
    <property type="match status" value="1"/>
</dbReference>
<dbReference type="Pfam" id="PF00230">
    <property type="entry name" value="MIP"/>
    <property type="match status" value="1"/>
</dbReference>
<dbReference type="PRINTS" id="PR00783">
    <property type="entry name" value="MINTRINSICP"/>
</dbReference>
<dbReference type="SUPFAM" id="SSF81338">
    <property type="entry name" value="Aquaporin-like"/>
    <property type="match status" value="1"/>
</dbReference>
<dbReference type="PROSITE" id="PS00221">
    <property type="entry name" value="MIP"/>
    <property type="match status" value="1"/>
</dbReference>
<feature type="chain" id="PRO_0000064072" description="Probable aquaporin NIP-type">
    <location>
        <begin position="1"/>
        <end position="270"/>
    </location>
</feature>
<feature type="transmembrane region" description="Helical; Name=1" evidence="2">
    <location>
        <begin position="45"/>
        <end position="65"/>
    </location>
</feature>
<feature type="transmembrane region" description="Helical; Name=2" evidence="2">
    <location>
        <begin position="72"/>
        <end position="92"/>
    </location>
</feature>
<feature type="transmembrane region" description="Helical; Name=3" evidence="2">
    <location>
        <begin position="121"/>
        <end position="141"/>
    </location>
</feature>
<feature type="transmembrane region" description="Helical; Name=4" evidence="2">
    <location>
        <begin position="160"/>
        <end position="180"/>
    </location>
</feature>
<feature type="transmembrane region" description="Helical; Name=5" evidence="2">
    <location>
        <begin position="188"/>
        <end position="208"/>
    </location>
</feature>
<feature type="transmembrane region" description="Helical; Name=6" evidence="2">
    <location>
        <begin position="231"/>
        <end position="251"/>
    </location>
</feature>
<feature type="short sequence motif" description="NPA 1">
    <location>
        <begin position="101"/>
        <end position="103"/>
    </location>
</feature>
<feature type="short sequence motif" description="NPA 2">
    <location>
        <begin position="213"/>
        <end position="215"/>
    </location>
</feature>
<sequence length="270" mass="28456">MAKKDGNQEEEISQMEEGNIHSASNSDSNVGFCSSVSVVVILQKLIAEAIGTYFVIFAGCGSVAVNKIYGSVTFPGICVTWGLIVMVMVYTVGYISGAHFNPAVTITFSIFGRFPWKQVPLYIIAQLMGSILASGTLALLFDVTPQAYFGTVPVGSNGQSLAIEIIISFLLMFVISGVATDDRAIGQVAGIAVGMTITLNVFVAGPISGASMNPARSIGPAIVKHVYTGLWVYVVGPIIGTLAGAFVYNLIRSTDKPLRELAKSASSLRS</sequence>
<comment type="function">
    <text evidence="1">Aquaporins facilitate the transport of water and small neutral solutes across cell membranes.</text>
</comment>
<comment type="subcellular location">
    <subcellularLocation>
        <location>Membrane</location>
        <topology>Multi-pass membrane protein</topology>
    </subcellularLocation>
</comment>
<comment type="tissue specificity">
    <text>Pollen specific.</text>
</comment>
<comment type="domain">
    <text>Aquaporins contain two tandem repeats each containing three membrane-spanning domains and a pore-forming loop with the signature motif Asn-Pro-Ala (NPA).</text>
</comment>
<comment type="similarity">
    <text evidence="3">Belongs to the MIP/aquaporin (TC 1.A.8) family. NIP (TC 1.A.8.12) subfamily.</text>
</comment>